<keyword id="KW-0025">Alternative splicing</keyword>
<keyword id="KW-0963">Cytoplasm</keyword>
<keyword id="KW-0217">Developmental protein</keyword>
<keyword id="KW-0539">Nucleus</keyword>
<keyword id="KW-1185">Reference proteome</keyword>
<keyword id="KW-0677">Repeat</keyword>
<keyword id="KW-0853">WD repeat</keyword>
<feature type="chain" id="PRO_0000433993" description="WD repeat-containing protein 55">
    <location>
        <begin position="1"/>
        <end position="353"/>
    </location>
</feature>
<feature type="repeat" description="WD 1" evidence="1">
    <location>
        <begin position="4"/>
        <end position="43"/>
    </location>
</feature>
<feature type="repeat" description="WD 2" evidence="1">
    <location>
        <begin position="49"/>
        <end position="88"/>
    </location>
</feature>
<feature type="repeat" description="WD 3" evidence="1">
    <location>
        <begin position="92"/>
        <end position="130"/>
    </location>
</feature>
<feature type="repeat" description="WD 4" evidence="1">
    <location>
        <begin position="133"/>
        <end position="172"/>
    </location>
</feature>
<feature type="repeat" description="WD 5" evidence="1">
    <location>
        <begin position="175"/>
        <end position="214"/>
    </location>
</feature>
<feature type="repeat" description="WD 6" evidence="1">
    <location>
        <begin position="218"/>
        <end position="257"/>
    </location>
</feature>
<feature type="repeat" description="WD 7" evidence="1">
    <location>
        <begin position="260"/>
        <end position="299"/>
    </location>
</feature>
<feature type="region of interest" description="Disordered" evidence="2">
    <location>
        <begin position="300"/>
        <end position="353"/>
    </location>
</feature>
<feature type="compositionally biased region" description="Acidic residues" evidence="2">
    <location>
        <begin position="310"/>
        <end position="323"/>
    </location>
</feature>
<feature type="compositionally biased region" description="Low complexity" evidence="2">
    <location>
        <begin position="339"/>
        <end position="353"/>
    </location>
</feature>
<feature type="splice variant" id="VSP_057867" description="In isoform 2.">
    <original>MEIDLGANAFGIDFHPSTNLVAAGLIDGHLHLYRYDSDSSLVRERKVRAHKESCRAVRFIDDGQR</original>
    <variation>MFFCWVLG</variation>
    <location>
        <begin position="1"/>
        <end position="65"/>
    </location>
</feature>
<accession>O80775</accession>
<accession>F4IGY3</accession>
<proteinExistence type="evidence at protein level"/>
<gene>
    <name evidence="5" type="primary">WDR55</name>
    <name evidence="7" type="ordered locus">At2g34260</name>
</gene>
<sequence length="353" mass="38426">MEIDLGANAFGIDFHPSTNLVAAGLIDGHLHLYRYDSDSSLVRERKVRAHKESCRAVRFIDDGQRIVTASADCSILATDVETGAQVAHLENAHEDAVNTLINVTETTIASGDDKGCVKIWDTRQRSCSHEFNAHEDYISGMTFASDSMKLVVTSGDGTLSVCNLRTSKVQSQSEFSEDELLSVVIMKNGRKVICGTQNGTLLLYSWGFFKDCSDRFVDLAPNSVDALLKLDEDRLITGCDNGIISLVGILPNRIIQPIGSHDYPIEDLALSHDKKFLGSTAHDSMLKLWNLEEILEGSNVNSGNASGAAEDSDSDNDGMDLDNDPSKSSKGSKRKTKSKANTLNATNNFFADL</sequence>
<name>WDR55_ARATH</name>
<comment type="function">
    <text evidence="3 4">Required for male and female gametogenesis, seed development, and embryo and endosperm development at early stages. Involved in the establishment of bilateral symmetry in the transition from the globular to the heart embryo stage. May act in the frame of a CRL4 complex (PubMed:22447688). Required for proper vegetative growth and organization of the adult plant body. May play a role in hormonal control of plant development (PubMed:23803743).</text>
</comment>
<comment type="subunit">
    <text evidence="3">Interacts with DDB1A.</text>
</comment>
<comment type="subcellular location">
    <subcellularLocation>
        <location evidence="3">Nucleus</location>
    </subcellularLocation>
    <subcellularLocation>
        <location evidence="3">Cytoplasm</location>
    </subcellularLocation>
</comment>
<comment type="alternative products">
    <event type="alternative splicing"/>
    <isoform>
        <id>O80775-1</id>
        <name>1</name>
        <sequence type="displayed"/>
    </isoform>
    <isoform>
        <id>O80775-2</id>
        <name>2</name>
        <sequence type="described" ref="VSP_057867"/>
    </isoform>
</comment>
<comment type="tissue specificity">
    <text evidence="3">Highly expressed in roots. Expressed in cotyledons, leaves, buds and flowers.</text>
</comment>
<comment type="developmental stage">
    <text evidence="3">Expressed in female gametophyte throughout embryo sac development. During pollen development, expressed from meiosis up to the second pollen mitosis, but not at mature (three nucleate) stages.</text>
</comment>
<comment type="disruption phenotype">
    <text evidence="3">Embryonic lethality when homozygous, due to embryo and endosperm developmental arrest at various stages ranging from the zygote stage to the globular stage. Failure in the fusion of the polar cells in embryo sac development.</text>
</comment>
<comment type="miscellaneous">
    <text evidence="4">Plants with a weak allele homozygous for WDR55 display pleiotropic phenotypes in the seedling and adult stages.</text>
</comment>
<comment type="similarity">
    <text evidence="6">Belongs to the WD repeat WDR55 family.</text>
</comment>
<protein>
    <recommendedName>
        <fullName evidence="6">WD repeat-containing protein 55</fullName>
    </recommendedName>
    <alternativeName>
        <fullName evidence="5">Protein WD repeat domain 55</fullName>
    </alternativeName>
    <alternativeName>
        <fullName evidence="6">Protein WDR55 homolog</fullName>
    </alternativeName>
</protein>
<reference key="1">
    <citation type="journal article" date="1999" name="Nature">
        <title>Sequence and analysis of chromosome 2 of the plant Arabidopsis thaliana.</title>
        <authorList>
            <person name="Lin X."/>
            <person name="Kaul S."/>
            <person name="Rounsley S.D."/>
            <person name="Shea T.P."/>
            <person name="Benito M.-I."/>
            <person name="Town C.D."/>
            <person name="Fujii C.Y."/>
            <person name="Mason T.M."/>
            <person name="Bowman C.L."/>
            <person name="Barnstead M.E."/>
            <person name="Feldblyum T.V."/>
            <person name="Buell C.R."/>
            <person name="Ketchum K.A."/>
            <person name="Lee J.J."/>
            <person name="Ronning C.M."/>
            <person name="Koo H.L."/>
            <person name="Moffat K.S."/>
            <person name="Cronin L.A."/>
            <person name="Shen M."/>
            <person name="Pai G."/>
            <person name="Van Aken S."/>
            <person name="Umayam L."/>
            <person name="Tallon L.J."/>
            <person name="Gill J.E."/>
            <person name="Adams M.D."/>
            <person name="Carrera A.J."/>
            <person name="Creasy T.H."/>
            <person name="Goodman H.M."/>
            <person name="Somerville C.R."/>
            <person name="Copenhaver G.P."/>
            <person name="Preuss D."/>
            <person name="Nierman W.C."/>
            <person name="White O."/>
            <person name="Eisen J.A."/>
            <person name="Salzberg S.L."/>
            <person name="Fraser C.M."/>
            <person name="Venter J.C."/>
        </authorList>
    </citation>
    <scope>NUCLEOTIDE SEQUENCE [LARGE SCALE GENOMIC DNA]</scope>
    <source>
        <strain>cv. Columbia</strain>
    </source>
</reference>
<reference key="2">
    <citation type="journal article" date="2017" name="Plant J.">
        <title>Araport11: a complete reannotation of the Arabidopsis thaliana reference genome.</title>
        <authorList>
            <person name="Cheng C.Y."/>
            <person name="Krishnakumar V."/>
            <person name="Chan A.P."/>
            <person name="Thibaud-Nissen F."/>
            <person name="Schobel S."/>
            <person name="Town C.D."/>
        </authorList>
    </citation>
    <scope>GENOME REANNOTATION</scope>
    <source>
        <strain>cv. Columbia</strain>
    </source>
</reference>
<reference key="3">
    <citation type="journal article" date="2002" name="Science">
        <title>Functional annotation of a full-length Arabidopsis cDNA collection.</title>
        <authorList>
            <person name="Seki M."/>
            <person name="Narusaka M."/>
            <person name="Kamiya A."/>
            <person name="Ishida J."/>
            <person name="Satou M."/>
            <person name="Sakurai T."/>
            <person name="Nakajima M."/>
            <person name="Enju A."/>
            <person name="Akiyama K."/>
            <person name="Oono Y."/>
            <person name="Muramatsu M."/>
            <person name="Hayashizaki Y."/>
            <person name="Kawai J."/>
            <person name="Carninci P."/>
            <person name="Itoh M."/>
            <person name="Ishii Y."/>
            <person name="Arakawa T."/>
            <person name="Shibata K."/>
            <person name="Shinagawa A."/>
            <person name="Shinozaki K."/>
        </authorList>
    </citation>
    <scope>NUCLEOTIDE SEQUENCE [LARGE SCALE MRNA] (ISOFORM 1)</scope>
    <source>
        <strain>cv. Columbia</strain>
    </source>
</reference>
<reference key="4">
    <citation type="journal article" date="2003" name="Science">
        <title>Empirical analysis of transcriptional activity in the Arabidopsis genome.</title>
        <authorList>
            <person name="Yamada K."/>
            <person name="Lim J."/>
            <person name="Dale J.M."/>
            <person name="Chen H."/>
            <person name="Shinn P."/>
            <person name="Palm C.J."/>
            <person name="Southwick A.M."/>
            <person name="Wu H.C."/>
            <person name="Kim C.J."/>
            <person name="Nguyen M."/>
            <person name="Pham P.K."/>
            <person name="Cheuk R.F."/>
            <person name="Karlin-Newmann G."/>
            <person name="Liu S.X."/>
            <person name="Lam B."/>
            <person name="Sakano H."/>
            <person name="Wu T."/>
            <person name="Yu G."/>
            <person name="Miranda M."/>
            <person name="Quach H.L."/>
            <person name="Tripp M."/>
            <person name="Chang C.H."/>
            <person name="Lee J.M."/>
            <person name="Toriumi M.J."/>
            <person name="Chan M.M."/>
            <person name="Tang C.C."/>
            <person name="Onodera C.S."/>
            <person name="Deng J.M."/>
            <person name="Akiyama K."/>
            <person name="Ansari Y."/>
            <person name="Arakawa T."/>
            <person name="Banh J."/>
            <person name="Banno F."/>
            <person name="Bowser L."/>
            <person name="Brooks S.Y."/>
            <person name="Carninci P."/>
            <person name="Chao Q."/>
            <person name="Choy N."/>
            <person name="Enju A."/>
            <person name="Goldsmith A.D."/>
            <person name="Gurjal M."/>
            <person name="Hansen N.F."/>
            <person name="Hayashizaki Y."/>
            <person name="Johnson-Hopson C."/>
            <person name="Hsuan V.W."/>
            <person name="Iida K."/>
            <person name="Karnes M."/>
            <person name="Khan S."/>
            <person name="Koesema E."/>
            <person name="Ishida J."/>
            <person name="Jiang P.X."/>
            <person name="Jones T."/>
            <person name="Kawai J."/>
            <person name="Kamiya A."/>
            <person name="Meyers C."/>
            <person name="Nakajima M."/>
            <person name="Narusaka M."/>
            <person name="Seki M."/>
            <person name="Sakurai T."/>
            <person name="Satou M."/>
            <person name="Tamse R."/>
            <person name="Vaysberg M."/>
            <person name="Wallender E.K."/>
            <person name="Wong C."/>
            <person name="Yamamura Y."/>
            <person name="Yuan S."/>
            <person name="Shinozaki K."/>
            <person name="Davis R.W."/>
            <person name="Theologis A."/>
            <person name="Ecker J.R."/>
        </authorList>
    </citation>
    <scope>NUCLEOTIDE SEQUENCE [LARGE SCALE MRNA] (ISOFORM 1)</scope>
    <source>
        <strain>cv. Columbia</strain>
    </source>
</reference>
<reference key="5">
    <citation type="submission" date="2002-03" db="EMBL/GenBank/DDBJ databases">
        <title>Full-length cDNA from Arabidopsis thaliana.</title>
        <authorList>
            <person name="Brover V.V."/>
            <person name="Troukhan M.E."/>
            <person name="Alexandrov N.A."/>
            <person name="Lu Y.-P."/>
            <person name="Flavell R.B."/>
            <person name="Feldmann K.A."/>
        </authorList>
    </citation>
    <scope>NUCLEOTIDE SEQUENCE [LARGE SCALE MRNA] (ISOFORM 1)</scope>
</reference>
<reference key="6">
    <citation type="journal article" date="2012" name="Plant Cell">
        <title>Arabidopsis WD repeat domain55 Interacts with DNA damaged binding protein1 and is required for apical patterning in the embryo.</title>
        <authorList>
            <person name="Bjerkan K.N."/>
            <person name="Jung-Romeo S."/>
            <person name="Jurgens G."/>
            <person name="Genschik P."/>
            <person name="Grini P.E."/>
        </authorList>
    </citation>
    <scope>FUNCTION</scope>
    <scope>INTERACTION WITH DDB1A</scope>
    <scope>SUBCELLULAR LOCATION</scope>
    <scope>TISSUE SPECIFICITY</scope>
    <scope>DEVELOPMENTAL STAGE</scope>
    <scope>DISRUPTION PHENOTYPE</scope>
</reference>
<reference key="7">
    <citation type="journal article" date="2013" name="Plant Signal. Behav.">
        <title>The Arabidopsis DDB1 interacting protein WDR55 is required for vegetative development.</title>
        <authorList>
            <person name="Bjerkan K.N."/>
            <person name="Grini P.E."/>
        </authorList>
    </citation>
    <scope>FUNCTION</scope>
</reference>
<evidence type="ECO:0000255" key="1"/>
<evidence type="ECO:0000256" key="2">
    <source>
        <dbReference type="SAM" id="MobiDB-lite"/>
    </source>
</evidence>
<evidence type="ECO:0000269" key="3">
    <source>
    </source>
</evidence>
<evidence type="ECO:0000269" key="4">
    <source>
    </source>
</evidence>
<evidence type="ECO:0000303" key="5">
    <source>
    </source>
</evidence>
<evidence type="ECO:0000305" key="6"/>
<evidence type="ECO:0000312" key="7">
    <source>
        <dbReference type="Araport" id="AT2G34260"/>
    </source>
</evidence>
<organism>
    <name type="scientific">Arabidopsis thaliana</name>
    <name type="common">Mouse-ear cress</name>
    <dbReference type="NCBI Taxonomy" id="3702"/>
    <lineage>
        <taxon>Eukaryota</taxon>
        <taxon>Viridiplantae</taxon>
        <taxon>Streptophyta</taxon>
        <taxon>Embryophyta</taxon>
        <taxon>Tracheophyta</taxon>
        <taxon>Spermatophyta</taxon>
        <taxon>Magnoliopsida</taxon>
        <taxon>eudicotyledons</taxon>
        <taxon>Gunneridae</taxon>
        <taxon>Pentapetalae</taxon>
        <taxon>rosids</taxon>
        <taxon>malvids</taxon>
        <taxon>Brassicales</taxon>
        <taxon>Brassicaceae</taxon>
        <taxon>Camelineae</taxon>
        <taxon>Arabidopsis</taxon>
    </lineage>
</organism>
<dbReference type="EMBL" id="AC004481">
    <property type="protein sequence ID" value="AAC27402.2"/>
    <property type="molecule type" value="Genomic_DNA"/>
</dbReference>
<dbReference type="EMBL" id="CP002685">
    <property type="protein sequence ID" value="AEC08945.1"/>
    <property type="molecule type" value="Genomic_DNA"/>
</dbReference>
<dbReference type="EMBL" id="CP002685">
    <property type="protein sequence ID" value="AEC08946.1"/>
    <property type="molecule type" value="Genomic_DNA"/>
</dbReference>
<dbReference type="EMBL" id="AK117481">
    <property type="protein sequence ID" value="BAC42145.1"/>
    <property type="molecule type" value="mRNA"/>
</dbReference>
<dbReference type="EMBL" id="BT005438">
    <property type="protein sequence ID" value="AAO63858.1"/>
    <property type="molecule type" value="mRNA"/>
</dbReference>
<dbReference type="EMBL" id="AY087666">
    <property type="protein sequence ID" value="AAM65204.1"/>
    <property type="molecule type" value="mRNA"/>
</dbReference>
<dbReference type="PIR" id="T02314">
    <property type="entry name" value="T02314"/>
</dbReference>
<dbReference type="RefSeq" id="NP_565782.1">
    <molecule id="O80775-1"/>
    <property type="nucleotide sequence ID" value="NM_128977.4"/>
</dbReference>
<dbReference type="RefSeq" id="NP_973596.1">
    <molecule id="O80775-2"/>
    <property type="nucleotide sequence ID" value="NM_201867.2"/>
</dbReference>
<dbReference type="SMR" id="O80775"/>
<dbReference type="FunCoup" id="O80775">
    <property type="interactions" value="3327"/>
</dbReference>
<dbReference type="STRING" id="3702.O80775"/>
<dbReference type="iPTMnet" id="O80775"/>
<dbReference type="PaxDb" id="3702-AT2G34260.1"/>
<dbReference type="ProteomicsDB" id="242636">
    <molecule id="O80775-1"/>
</dbReference>
<dbReference type="EnsemblPlants" id="AT2G34260.1">
    <molecule id="O80775-1"/>
    <property type="protein sequence ID" value="AT2G34260.1"/>
    <property type="gene ID" value="AT2G34260"/>
</dbReference>
<dbReference type="EnsemblPlants" id="AT2G34260.2">
    <molecule id="O80775-2"/>
    <property type="protein sequence ID" value="AT2G34260.2"/>
    <property type="gene ID" value="AT2G34260"/>
</dbReference>
<dbReference type="GeneID" id="817987"/>
<dbReference type="Gramene" id="AT2G34260.1">
    <molecule id="O80775-1"/>
    <property type="protein sequence ID" value="AT2G34260.1"/>
    <property type="gene ID" value="AT2G34260"/>
</dbReference>
<dbReference type="Gramene" id="AT2G34260.2">
    <molecule id="O80775-2"/>
    <property type="protein sequence ID" value="AT2G34260.2"/>
    <property type="gene ID" value="AT2G34260"/>
</dbReference>
<dbReference type="KEGG" id="ath:AT2G34260"/>
<dbReference type="Araport" id="AT2G34260"/>
<dbReference type="TAIR" id="AT2G34260">
    <property type="gene designation" value="WDR55"/>
</dbReference>
<dbReference type="eggNOG" id="KOG2444">
    <property type="taxonomic scope" value="Eukaryota"/>
</dbReference>
<dbReference type="InParanoid" id="O80775"/>
<dbReference type="OMA" id="QAIHPTE"/>
<dbReference type="PhylomeDB" id="O80775"/>
<dbReference type="PRO" id="PR:O80775"/>
<dbReference type="Proteomes" id="UP000006548">
    <property type="component" value="Chromosome 2"/>
</dbReference>
<dbReference type="ExpressionAtlas" id="O80775">
    <property type="expression patterns" value="baseline and differential"/>
</dbReference>
<dbReference type="GO" id="GO:0005737">
    <property type="term" value="C:cytoplasm"/>
    <property type="evidence" value="ECO:0000314"/>
    <property type="project" value="TAIR"/>
</dbReference>
<dbReference type="GO" id="GO:0005634">
    <property type="term" value="C:nucleus"/>
    <property type="evidence" value="ECO:0000314"/>
    <property type="project" value="TAIR"/>
</dbReference>
<dbReference type="GO" id="GO:0009855">
    <property type="term" value="P:determination of bilateral symmetry"/>
    <property type="evidence" value="ECO:0000315"/>
    <property type="project" value="TAIR"/>
</dbReference>
<dbReference type="GO" id="GO:0080186">
    <property type="term" value="P:developmental vegetative growth"/>
    <property type="evidence" value="ECO:0000315"/>
    <property type="project" value="UniProtKB"/>
</dbReference>
<dbReference type="GO" id="GO:0009793">
    <property type="term" value="P:embryo development ending in seed dormancy"/>
    <property type="evidence" value="ECO:0000315"/>
    <property type="project" value="TAIR"/>
</dbReference>
<dbReference type="GO" id="GO:0009553">
    <property type="term" value="P:embryo sac development"/>
    <property type="evidence" value="ECO:0000315"/>
    <property type="project" value="TAIR"/>
</dbReference>
<dbReference type="GO" id="GO:0009960">
    <property type="term" value="P:endosperm development"/>
    <property type="evidence" value="ECO:0000315"/>
    <property type="project" value="TAIR"/>
</dbReference>
<dbReference type="GO" id="GO:0010197">
    <property type="term" value="P:polar nucleus fusion"/>
    <property type="evidence" value="ECO:0000315"/>
    <property type="project" value="TAIR"/>
</dbReference>
<dbReference type="FunFam" id="2.130.10.10:FF:003064">
    <property type="entry name" value="WD repeat-containing protein 55"/>
    <property type="match status" value="1"/>
</dbReference>
<dbReference type="FunFam" id="2.130.10.10:FF:000516">
    <property type="entry name" value="WD repeat-containing protein 55-like"/>
    <property type="match status" value="1"/>
</dbReference>
<dbReference type="Gene3D" id="2.130.10.10">
    <property type="entry name" value="YVTN repeat-like/Quinoprotein amine dehydrogenase"/>
    <property type="match status" value="2"/>
</dbReference>
<dbReference type="InterPro" id="IPR015943">
    <property type="entry name" value="WD40/YVTN_repeat-like_dom_sf"/>
</dbReference>
<dbReference type="InterPro" id="IPR019775">
    <property type="entry name" value="WD40_repeat_CS"/>
</dbReference>
<dbReference type="InterPro" id="IPR036322">
    <property type="entry name" value="WD40_repeat_dom_sf"/>
</dbReference>
<dbReference type="InterPro" id="IPR001680">
    <property type="entry name" value="WD40_rpt"/>
</dbReference>
<dbReference type="InterPro" id="IPR017422">
    <property type="entry name" value="WDR55"/>
</dbReference>
<dbReference type="InterPro" id="IPR050505">
    <property type="entry name" value="WDR55_POC1"/>
</dbReference>
<dbReference type="PANTHER" id="PTHR44019">
    <property type="entry name" value="WD REPEAT-CONTAINING PROTEIN 55"/>
    <property type="match status" value="1"/>
</dbReference>
<dbReference type="PANTHER" id="PTHR44019:SF20">
    <property type="entry name" value="WD REPEAT-CONTAINING PROTEIN 55"/>
    <property type="match status" value="1"/>
</dbReference>
<dbReference type="Pfam" id="PF24796">
    <property type="entry name" value="WDR55"/>
    <property type="match status" value="1"/>
</dbReference>
<dbReference type="PIRSF" id="PIRSF038169">
    <property type="entry name" value="WD_repeat_p55"/>
    <property type="match status" value="1"/>
</dbReference>
<dbReference type="SMART" id="SM00320">
    <property type="entry name" value="WD40"/>
    <property type="match status" value="5"/>
</dbReference>
<dbReference type="SUPFAM" id="SSF50978">
    <property type="entry name" value="WD40 repeat-like"/>
    <property type="match status" value="1"/>
</dbReference>
<dbReference type="PROSITE" id="PS00678">
    <property type="entry name" value="WD_REPEATS_1"/>
    <property type="match status" value="1"/>
</dbReference>
<dbReference type="PROSITE" id="PS50082">
    <property type="entry name" value="WD_REPEATS_2"/>
    <property type="match status" value="2"/>
</dbReference>
<dbReference type="PROSITE" id="PS50294">
    <property type="entry name" value="WD_REPEATS_REGION"/>
    <property type="match status" value="1"/>
</dbReference>